<organism>
    <name type="scientific">Chloranthus spicatus</name>
    <name type="common">Chulantree</name>
    <name type="synonym">Nigrina spicata</name>
    <dbReference type="NCBI Taxonomy" id="13006"/>
    <lineage>
        <taxon>Eukaryota</taxon>
        <taxon>Viridiplantae</taxon>
        <taxon>Streptophyta</taxon>
        <taxon>Embryophyta</taxon>
        <taxon>Tracheophyta</taxon>
        <taxon>Spermatophyta</taxon>
        <taxon>Magnoliopsida</taxon>
        <taxon>Chloranthales</taxon>
        <taxon>Chloranthaceae</taxon>
        <taxon>Chloranthus</taxon>
    </lineage>
</organism>
<sequence>MMLEHVLVLSAYLFSIGIYGLITSRNMVRALMCLELILNAVNMNLVTFSDLFDSRQLKGDIFSIFVIAIAAAEAAIGPAIVSSIHRNRKSTRINQSNLLNK</sequence>
<keyword id="KW-0150">Chloroplast</keyword>
<keyword id="KW-0472">Membrane</keyword>
<keyword id="KW-0520">NAD</keyword>
<keyword id="KW-0521">NADP</keyword>
<keyword id="KW-0934">Plastid</keyword>
<keyword id="KW-0618">Plastoquinone</keyword>
<keyword id="KW-0874">Quinone</keyword>
<keyword id="KW-0793">Thylakoid</keyword>
<keyword id="KW-1278">Translocase</keyword>
<keyword id="KW-0812">Transmembrane</keyword>
<keyword id="KW-1133">Transmembrane helix</keyword>
<keyword id="KW-0813">Transport</keyword>
<comment type="function">
    <text evidence="1">NDH shuttles electrons from NAD(P)H:plastoquinone, via FMN and iron-sulfur (Fe-S) centers, to quinones in the photosynthetic chain and possibly in a chloroplast respiratory chain. The immediate electron acceptor for the enzyme in this species is believed to be plastoquinone. Couples the redox reaction to proton translocation, and thus conserves the redox energy in a proton gradient.</text>
</comment>
<comment type="catalytic activity">
    <reaction evidence="1">
        <text>a plastoquinone + NADH + (n+1) H(+)(in) = a plastoquinol + NAD(+) + n H(+)(out)</text>
        <dbReference type="Rhea" id="RHEA:42608"/>
        <dbReference type="Rhea" id="RHEA-COMP:9561"/>
        <dbReference type="Rhea" id="RHEA-COMP:9562"/>
        <dbReference type="ChEBI" id="CHEBI:15378"/>
        <dbReference type="ChEBI" id="CHEBI:17757"/>
        <dbReference type="ChEBI" id="CHEBI:57540"/>
        <dbReference type="ChEBI" id="CHEBI:57945"/>
        <dbReference type="ChEBI" id="CHEBI:62192"/>
    </reaction>
</comment>
<comment type="catalytic activity">
    <reaction evidence="1">
        <text>a plastoquinone + NADPH + (n+1) H(+)(in) = a plastoquinol + NADP(+) + n H(+)(out)</text>
        <dbReference type="Rhea" id="RHEA:42612"/>
        <dbReference type="Rhea" id="RHEA-COMP:9561"/>
        <dbReference type="Rhea" id="RHEA-COMP:9562"/>
        <dbReference type="ChEBI" id="CHEBI:15378"/>
        <dbReference type="ChEBI" id="CHEBI:17757"/>
        <dbReference type="ChEBI" id="CHEBI:57783"/>
        <dbReference type="ChEBI" id="CHEBI:58349"/>
        <dbReference type="ChEBI" id="CHEBI:62192"/>
    </reaction>
</comment>
<comment type="subunit">
    <text evidence="1">NDH is composed of at least 16 different subunits, 5 of which are encoded in the nucleus.</text>
</comment>
<comment type="subcellular location">
    <subcellularLocation>
        <location evidence="1">Plastid</location>
        <location evidence="1">Chloroplast thylakoid membrane</location>
        <topology evidence="1">Multi-pass membrane protein</topology>
    </subcellularLocation>
</comment>
<comment type="similarity">
    <text evidence="1">Belongs to the complex I subunit 4L family.</text>
</comment>
<geneLocation type="chloroplast"/>
<dbReference type="EC" id="7.1.1.-" evidence="1"/>
<dbReference type="EMBL" id="EF380352">
    <property type="protein sequence ID" value="ABQ43312.1"/>
    <property type="molecule type" value="Genomic_DNA"/>
</dbReference>
<dbReference type="RefSeq" id="YP_001294151.1">
    <property type="nucleotide sequence ID" value="NC_009598.1"/>
</dbReference>
<dbReference type="SMR" id="A6MMH5"/>
<dbReference type="GeneID" id="5236516"/>
<dbReference type="GO" id="GO:0009535">
    <property type="term" value="C:chloroplast thylakoid membrane"/>
    <property type="evidence" value="ECO:0007669"/>
    <property type="project" value="UniProtKB-SubCell"/>
</dbReference>
<dbReference type="GO" id="GO:0030964">
    <property type="term" value="C:NADH dehydrogenase complex"/>
    <property type="evidence" value="ECO:0007669"/>
    <property type="project" value="TreeGrafter"/>
</dbReference>
<dbReference type="GO" id="GO:0016655">
    <property type="term" value="F:oxidoreductase activity, acting on NAD(P)H, quinone or similar compound as acceptor"/>
    <property type="evidence" value="ECO:0007669"/>
    <property type="project" value="UniProtKB-UniRule"/>
</dbReference>
<dbReference type="GO" id="GO:0048038">
    <property type="term" value="F:quinone binding"/>
    <property type="evidence" value="ECO:0007669"/>
    <property type="project" value="UniProtKB-KW"/>
</dbReference>
<dbReference type="GO" id="GO:0042773">
    <property type="term" value="P:ATP synthesis coupled electron transport"/>
    <property type="evidence" value="ECO:0007669"/>
    <property type="project" value="InterPro"/>
</dbReference>
<dbReference type="GO" id="GO:0019684">
    <property type="term" value="P:photosynthesis, light reaction"/>
    <property type="evidence" value="ECO:0007669"/>
    <property type="project" value="UniProtKB-UniRule"/>
</dbReference>
<dbReference type="FunFam" id="1.10.287.3510:FF:000001">
    <property type="entry name" value="NADH-quinone oxidoreductase subunit K"/>
    <property type="match status" value="1"/>
</dbReference>
<dbReference type="Gene3D" id="1.10.287.3510">
    <property type="match status" value="1"/>
</dbReference>
<dbReference type="HAMAP" id="MF_01456">
    <property type="entry name" value="NDH1_NuoK"/>
    <property type="match status" value="1"/>
</dbReference>
<dbReference type="InterPro" id="IPR001133">
    <property type="entry name" value="NADH_UbQ_OxRdtase_chain4L/K"/>
</dbReference>
<dbReference type="InterPro" id="IPR039428">
    <property type="entry name" value="NUOK/Mnh_C1-like"/>
</dbReference>
<dbReference type="NCBIfam" id="NF004320">
    <property type="entry name" value="PRK05715.1-2"/>
    <property type="match status" value="1"/>
</dbReference>
<dbReference type="NCBIfam" id="NF004322">
    <property type="entry name" value="PRK05715.1-4"/>
    <property type="match status" value="1"/>
</dbReference>
<dbReference type="PANTHER" id="PTHR11434:SF16">
    <property type="entry name" value="NADH-UBIQUINONE OXIDOREDUCTASE CHAIN 4L"/>
    <property type="match status" value="1"/>
</dbReference>
<dbReference type="PANTHER" id="PTHR11434">
    <property type="entry name" value="NADH-UBIQUINONE OXIDOREDUCTASE SUBUNIT ND4L"/>
    <property type="match status" value="1"/>
</dbReference>
<dbReference type="Pfam" id="PF00420">
    <property type="entry name" value="Oxidored_q2"/>
    <property type="match status" value="1"/>
</dbReference>
<name>NU4LC_CHLSC</name>
<accession>A6MMH5</accession>
<gene>
    <name evidence="1" type="primary">ndhE</name>
</gene>
<evidence type="ECO:0000255" key="1">
    <source>
        <dbReference type="HAMAP-Rule" id="MF_01456"/>
    </source>
</evidence>
<feature type="chain" id="PRO_0000360315" description="NAD(P)H-quinone oxidoreductase subunit 4L, chloroplastic">
    <location>
        <begin position="1"/>
        <end position="101"/>
    </location>
</feature>
<feature type="transmembrane region" description="Helical" evidence="1">
    <location>
        <begin position="2"/>
        <end position="22"/>
    </location>
</feature>
<feature type="transmembrane region" description="Helical" evidence="1">
    <location>
        <begin position="32"/>
        <end position="52"/>
    </location>
</feature>
<feature type="transmembrane region" description="Helical" evidence="1">
    <location>
        <begin position="61"/>
        <end position="81"/>
    </location>
</feature>
<protein>
    <recommendedName>
        <fullName evidence="1">NAD(P)H-quinone oxidoreductase subunit 4L, chloroplastic</fullName>
        <ecNumber evidence="1">7.1.1.-</ecNumber>
    </recommendedName>
    <alternativeName>
        <fullName evidence="1">NAD(P)H dehydrogenase subunit 4L</fullName>
    </alternativeName>
    <alternativeName>
        <fullName evidence="1">NADH-plastoquinone oxidoreductase subunit 4L</fullName>
    </alternativeName>
</protein>
<proteinExistence type="inferred from homology"/>
<reference key="1">
    <citation type="journal article" date="2007" name="Mol. Phylogenet. Evol.">
        <title>Phylogenetic and evolutionary implications of complete chloroplast genome sequences of four early-diverging angiosperms: Buxus (Buxaceae), Chloranthus (Chloranthaceae), Dioscorea (Dioscoreaceae), and Illicium (Schisandraceae).</title>
        <authorList>
            <person name="Hansen D.R."/>
            <person name="Dastidar S.G."/>
            <person name="Cai Z."/>
            <person name="Penaflor C."/>
            <person name="Kuehl J.V."/>
            <person name="Boore J.L."/>
            <person name="Jansen R.K."/>
        </authorList>
    </citation>
    <scope>NUCLEOTIDE SEQUENCE [LARGE SCALE GENOMIC DNA]</scope>
</reference>